<dbReference type="EC" id="3.1.3.71"/>
<dbReference type="EMBL" id="Y09476">
    <property type="protein sequence ID" value="CAA70658.1"/>
    <property type="molecule type" value="Genomic_DNA"/>
</dbReference>
<dbReference type="EMBL" id="AL009126">
    <property type="protein sequence ID" value="CAB12934.1"/>
    <property type="molecule type" value="Genomic_DNA"/>
</dbReference>
<dbReference type="PIR" id="D69839">
    <property type="entry name" value="D69839"/>
</dbReference>
<dbReference type="RefSeq" id="WP_003233050.1">
    <property type="nucleotide sequence ID" value="NZ_OZ025638.1"/>
</dbReference>
<dbReference type="SMR" id="O06738"/>
<dbReference type="FunCoup" id="O06738">
    <property type="interactions" value="183"/>
</dbReference>
<dbReference type="STRING" id="224308.BSU10940"/>
<dbReference type="PaxDb" id="224308-BSU10940"/>
<dbReference type="EnsemblBacteria" id="CAB12934">
    <property type="protein sequence ID" value="CAB12934"/>
    <property type="gene ID" value="BSU_10940"/>
</dbReference>
<dbReference type="GeneID" id="936357"/>
<dbReference type="KEGG" id="bsu:BSU10940"/>
<dbReference type="PATRIC" id="fig|224308.179.peg.1176"/>
<dbReference type="eggNOG" id="COG2045">
    <property type="taxonomic scope" value="Bacteria"/>
</dbReference>
<dbReference type="InParanoid" id="O06738"/>
<dbReference type="OrthoDB" id="4913at2"/>
<dbReference type="BioCyc" id="BSUB:BSU10940-MONOMER"/>
<dbReference type="Proteomes" id="UP000001570">
    <property type="component" value="Chromosome"/>
</dbReference>
<dbReference type="GO" id="GO:0050532">
    <property type="term" value="F:2-phosphosulfolactate phosphatase activity"/>
    <property type="evidence" value="ECO:0007669"/>
    <property type="project" value="UniProtKB-UniRule"/>
</dbReference>
<dbReference type="GO" id="GO:0000287">
    <property type="term" value="F:magnesium ion binding"/>
    <property type="evidence" value="ECO:0007669"/>
    <property type="project" value="UniProtKB-UniRule"/>
</dbReference>
<dbReference type="GO" id="GO:0050545">
    <property type="term" value="F:sulfopyruvate decarboxylase activity"/>
    <property type="evidence" value="ECO:0000318"/>
    <property type="project" value="GO_Central"/>
</dbReference>
<dbReference type="Gene3D" id="3.90.1560.10">
    <property type="entry name" value="ComB-like"/>
    <property type="match status" value="1"/>
</dbReference>
<dbReference type="HAMAP" id="MF_00490">
    <property type="entry name" value="ComB"/>
    <property type="match status" value="1"/>
</dbReference>
<dbReference type="InterPro" id="IPR005238">
    <property type="entry name" value="ComB-like"/>
</dbReference>
<dbReference type="InterPro" id="IPR036702">
    <property type="entry name" value="ComB-like_sf"/>
</dbReference>
<dbReference type="PANTHER" id="PTHR37311">
    <property type="entry name" value="2-PHOSPHOSULFOLACTATE PHOSPHATASE-RELATED"/>
    <property type="match status" value="1"/>
</dbReference>
<dbReference type="PANTHER" id="PTHR37311:SF1">
    <property type="entry name" value="2-PHOSPHOSULFOLACTATE PHOSPHATASE-RELATED"/>
    <property type="match status" value="1"/>
</dbReference>
<dbReference type="Pfam" id="PF04029">
    <property type="entry name" value="2-ph_phosp"/>
    <property type="match status" value="1"/>
</dbReference>
<dbReference type="SUPFAM" id="SSF142823">
    <property type="entry name" value="ComB-like"/>
    <property type="match status" value="1"/>
</dbReference>
<protein>
    <recommendedName>
        <fullName>Probable 2-phosphosulfolactate phosphatase</fullName>
        <ecNumber>3.1.3.71</ecNumber>
    </recommendedName>
</protein>
<organism>
    <name type="scientific">Bacillus subtilis (strain 168)</name>
    <dbReference type="NCBI Taxonomy" id="224308"/>
    <lineage>
        <taxon>Bacteria</taxon>
        <taxon>Bacillati</taxon>
        <taxon>Bacillota</taxon>
        <taxon>Bacilli</taxon>
        <taxon>Bacillales</taxon>
        <taxon>Bacillaceae</taxon>
        <taxon>Bacillus</taxon>
    </lineage>
</organism>
<accession>O06738</accession>
<reference key="1">
    <citation type="journal article" date="1997" name="Microbiology">
        <title>A Bacillus subtilis chromosome segment at the 100 degrees to 102 degrees position encoding 11 membrane proteins.</title>
        <authorList>
            <person name="Roche B."/>
            <person name="Autret S."/>
            <person name="Levine A."/>
            <person name="Vannier F."/>
            <person name="Medina N."/>
            <person name="Seror S.J."/>
        </authorList>
    </citation>
    <scope>NUCLEOTIDE SEQUENCE [GENOMIC DNA]</scope>
    <source>
        <strain>168</strain>
    </source>
</reference>
<reference key="2">
    <citation type="journal article" date="1997" name="Nature">
        <title>The complete genome sequence of the Gram-positive bacterium Bacillus subtilis.</title>
        <authorList>
            <person name="Kunst F."/>
            <person name="Ogasawara N."/>
            <person name="Moszer I."/>
            <person name="Albertini A.M."/>
            <person name="Alloni G."/>
            <person name="Azevedo V."/>
            <person name="Bertero M.G."/>
            <person name="Bessieres P."/>
            <person name="Bolotin A."/>
            <person name="Borchert S."/>
            <person name="Borriss R."/>
            <person name="Boursier L."/>
            <person name="Brans A."/>
            <person name="Braun M."/>
            <person name="Brignell S.C."/>
            <person name="Bron S."/>
            <person name="Brouillet S."/>
            <person name="Bruschi C.V."/>
            <person name="Caldwell B."/>
            <person name="Capuano V."/>
            <person name="Carter N.M."/>
            <person name="Choi S.-K."/>
            <person name="Codani J.-J."/>
            <person name="Connerton I.F."/>
            <person name="Cummings N.J."/>
            <person name="Daniel R.A."/>
            <person name="Denizot F."/>
            <person name="Devine K.M."/>
            <person name="Duesterhoeft A."/>
            <person name="Ehrlich S.D."/>
            <person name="Emmerson P.T."/>
            <person name="Entian K.-D."/>
            <person name="Errington J."/>
            <person name="Fabret C."/>
            <person name="Ferrari E."/>
            <person name="Foulger D."/>
            <person name="Fritz C."/>
            <person name="Fujita M."/>
            <person name="Fujita Y."/>
            <person name="Fuma S."/>
            <person name="Galizzi A."/>
            <person name="Galleron N."/>
            <person name="Ghim S.-Y."/>
            <person name="Glaser P."/>
            <person name="Goffeau A."/>
            <person name="Golightly E.J."/>
            <person name="Grandi G."/>
            <person name="Guiseppi G."/>
            <person name="Guy B.J."/>
            <person name="Haga K."/>
            <person name="Haiech J."/>
            <person name="Harwood C.R."/>
            <person name="Henaut A."/>
            <person name="Hilbert H."/>
            <person name="Holsappel S."/>
            <person name="Hosono S."/>
            <person name="Hullo M.-F."/>
            <person name="Itaya M."/>
            <person name="Jones L.-M."/>
            <person name="Joris B."/>
            <person name="Karamata D."/>
            <person name="Kasahara Y."/>
            <person name="Klaerr-Blanchard M."/>
            <person name="Klein C."/>
            <person name="Kobayashi Y."/>
            <person name="Koetter P."/>
            <person name="Koningstein G."/>
            <person name="Krogh S."/>
            <person name="Kumano M."/>
            <person name="Kurita K."/>
            <person name="Lapidus A."/>
            <person name="Lardinois S."/>
            <person name="Lauber J."/>
            <person name="Lazarevic V."/>
            <person name="Lee S.-M."/>
            <person name="Levine A."/>
            <person name="Liu H."/>
            <person name="Masuda S."/>
            <person name="Mauel C."/>
            <person name="Medigue C."/>
            <person name="Medina N."/>
            <person name="Mellado R.P."/>
            <person name="Mizuno M."/>
            <person name="Moestl D."/>
            <person name="Nakai S."/>
            <person name="Noback M."/>
            <person name="Noone D."/>
            <person name="O'Reilly M."/>
            <person name="Ogawa K."/>
            <person name="Ogiwara A."/>
            <person name="Oudega B."/>
            <person name="Park S.-H."/>
            <person name="Parro V."/>
            <person name="Pohl T.M."/>
            <person name="Portetelle D."/>
            <person name="Porwollik S."/>
            <person name="Prescott A.M."/>
            <person name="Presecan E."/>
            <person name="Pujic P."/>
            <person name="Purnelle B."/>
            <person name="Rapoport G."/>
            <person name="Rey M."/>
            <person name="Reynolds S."/>
            <person name="Rieger M."/>
            <person name="Rivolta C."/>
            <person name="Rocha E."/>
            <person name="Roche B."/>
            <person name="Rose M."/>
            <person name="Sadaie Y."/>
            <person name="Sato T."/>
            <person name="Scanlan E."/>
            <person name="Schleich S."/>
            <person name="Schroeter R."/>
            <person name="Scoffone F."/>
            <person name="Sekiguchi J."/>
            <person name="Sekowska A."/>
            <person name="Seror S.J."/>
            <person name="Serror P."/>
            <person name="Shin B.-S."/>
            <person name="Soldo B."/>
            <person name="Sorokin A."/>
            <person name="Tacconi E."/>
            <person name="Takagi T."/>
            <person name="Takahashi H."/>
            <person name="Takemaru K."/>
            <person name="Takeuchi M."/>
            <person name="Tamakoshi A."/>
            <person name="Tanaka T."/>
            <person name="Terpstra P."/>
            <person name="Tognoni A."/>
            <person name="Tosato V."/>
            <person name="Uchiyama S."/>
            <person name="Vandenbol M."/>
            <person name="Vannier F."/>
            <person name="Vassarotti A."/>
            <person name="Viari A."/>
            <person name="Wambutt R."/>
            <person name="Wedler E."/>
            <person name="Wedler H."/>
            <person name="Weitzenegger T."/>
            <person name="Winters P."/>
            <person name="Wipat A."/>
            <person name="Yamamoto H."/>
            <person name="Yamane K."/>
            <person name="Yasumoto K."/>
            <person name="Yata K."/>
            <person name="Yoshida K."/>
            <person name="Yoshikawa H.-F."/>
            <person name="Zumstein E."/>
            <person name="Yoshikawa H."/>
            <person name="Danchin A."/>
        </authorList>
    </citation>
    <scope>NUCLEOTIDE SEQUENCE [LARGE SCALE GENOMIC DNA]</scope>
    <source>
        <strain>168</strain>
    </source>
</reference>
<gene>
    <name type="primary">comB</name>
    <name type="synonym">yitC</name>
    <name type="ordered locus">BSU10940</name>
</gene>
<feature type="chain" id="PRO_0000081464" description="Probable 2-phosphosulfolactate phosphatase">
    <location>
        <begin position="1"/>
        <end position="228"/>
    </location>
</feature>
<comment type="catalytic activity">
    <reaction>
        <text>(2R)-O-phospho-3-sulfolactate + H2O = (2R)-3-sulfolactate + phosphate</text>
        <dbReference type="Rhea" id="RHEA:23416"/>
        <dbReference type="ChEBI" id="CHEBI:15377"/>
        <dbReference type="ChEBI" id="CHEBI:15597"/>
        <dbReference type="ChEBI" id="CHEBI:43474"/>
        <dbReference type="ChEBI" id="CHEBI:58738"/>
        <dbReference type="EC" id="3.1.3.71"/>
    </reaction>
</comment>
<comment type="cofactor">
    <cofactor evidence="1">
        <name>Mg(2+)</name>
        <dbReference type="ChEBI" id="CHEBI:18420"/>
    </cofactor>
</comment>
<comment type="similarity">
    <text evidence="2">Belongs to the ComB family.</text>
</comment>
<evidence type="ECO:0000250" key="1"/>
<evidence type="ECO:0000305" key="2"/>
<proteinExistence type="inferred from homology"/>
<keyword id="KW-0378">Hydrolase</keyword>
<keyword id="KW-0460">Magnesium</keyword>
<keyword id="KW-1185">Reference proteome</keyword>
<name>COMB_BACSU</name>
<sequence>MPIAIYQGHHHSLAPADINIVIDVIRAFTVAHYAFIGGAKEILLVRTADEAFALKDTYPDYVLTGEEKGVGISGFDLDNSPKRMAGQNMTDKSLIQKTTNGVTAALGALNAKHLFVTGFSNAKTTAQHVKKLVANDCVINIVASHPSGDDDMACAEYIKGIIEGTNVVTAAEAIERIKGSSVAEKFFDCRQPLFDSEDIVYCTKELTGDFVMKVKQDGEVPTIERVII</sequence>